<name>Y3974_ARATH</name>
<keyword id="KW-1185">Reference proteome</keyword>
<keyword id="KW-0833">Ubl conjugation pathway</keyword>
<organism>
    <name type="scientific">Arabidopsis thaliana</name>
    <name type="common">Mouse-ear cress</name>
    <dbReference type="NCBI Taxonomy" id="3702"/>
    <lineage>
        <taxon>Eukaryota</taxon>
        <taxon>Viridiplantae</taxon>
        <taxon>Streptophyta</taxon>
        <taxon>Embryophyta</taxon>
        <taxon>Tracheophyta</taxon>
        <taxon>Spermatophyta</taxon>
        <taxon>Magnoliopsida</taxon>
        <taxon>eudicotyledons</taxon>
        <taxon>Gunneridae</taxon>
        <taxon>Pentapetalae</taxon>
        <taxon>rosids</taxon>
        <taxon>malvids</taxon>
        <taxon>Brassicales</taxon>
        <taxon>Brassicaceae</taxon>
        <taxon>Camelineae</taxon>
        <taxon>Arabidopsis</taxon>
    </lineage>
</organism>
<gene>
    <name type="ordered locus">At3g29740</name>
    <name type="ORF">MOD1.17</name>
</gene>
<evidence type="ECO:0000250" key="1"/>
<evidence type="ECO:0000255" key="2">
    <source>
        <dbReference type="PROSITE-ProRule" id="PRU00037"/>
    </source>
</evidence>
<evidence type="ECO:0000269" key="3">
    <source>
    </source>
</evidence>
<sequence length="87" mass="9609">MASQTNKELFVGGLARILKEQRQVDVRLKAGDSDQKGVSISAHKLVLSARSEVFKMILETEEIKATTTLDTITLSELKHTELVALVE</sequence>
<feature type="chain" id="PRO_0000406000" description="Putative BTB/POZ domain-containing protein At3g29740">
    <location>
        <begin position="1"/>
        <end position="87"/>
    </location>
</feature>
<feature type="domain" description="BTB" evidence="2">
    <location>
        <begin position="24"/>
        <end position="87"/>
    </location>
</feature>
<comment type="function">
    <text evidence="1">May act as a substrate-specific adapter of an E3 ubiquitin-protein ligase complex (CUL3-RBX1-BTB) which mediates the ubiquitination and subsequent proteasomal degradation of target proteins.</text>
</comment>
<comment type="pathway">
    <text>Protein modification; protein ubiquitination.</text>
</comment>
<comment type="domain">
    <text evidence="3">The BTB/POZ domain mediates the interaction with some component of ubiquitin ligase complexes.</text>
</comment>
<dbReference type="EMBL" id="AB028618">
    <property type="protein sequence ID" value="BAB02525.1"/>
    <property type="molecule type" value="Genomic_DNA"/>
</dbReference>
<dbReference type="EMBL" id="CP002686">
    <property type="protein sequence ID" value="AEE77603.1"/>
    <property type="molecule type" value="Genomic_DNA"/>
</dbReference>
<dbReference type="RefSeq" id="NP_189617.1">
    <property type="nucleotide sequence ID" value="NM_113897.1"/>
</dbReference>
<dbReference type="SMR" id="Q9LRQ1"/>
<dbReference type="STRING" id="3702.Q9LRQ1"/>
<dbReference type="PaxDb" id="3702-AT3G29740.1"/>
<dbReference type="EnsemblPlants" id="AT3G29740.1">
    <property type="protein sequence ID" value="AT3G29740.1"/>
    <property type="gene ID" value="AT3G29740"/>
</dbReference>
<dbReference type="GeneID" id="822660"/>
<dbReference type="Gramene" id="AT3G29740.1">
    <property type="protein sequence ID" value="AT3G29740.1"/>
    <property type="gene ID" value="AT3G29740"/>
</dbReference>
<dbReference type="KEGG" id="ath:AT3G29740"/>
<dbReference type="Araport" id="AT3G29740"/>
<dbReference type="TAIR" id="AT3G29740"/>
<dbReference type="eggNOG" id="KOG1987">
    <property type="taxonomic scope" value="Eukaryota"/>
</dbReference>
<dbReference type="HOGENOM" id="CLU_2486420_0_0_1"/>
<dbReference type="InParanoid" id="Q9LRQ1"/>
<dbReference type="OrthoDB" id="10249567at2759"/>
<dbReference type="PhylomeDB" id="Q9LRQ1"/>
<dbReference type="UniPathway" id="UPA00143"/>
<dbReference type="PRO" id="PR:Q9LRQ1"/>
<dbReference type="Proteomes" id="UP000006548">
    <property type="component" value="Chromosome 3"/>
</dbReference>
<dbReference type="GO" id="GO:0016567">
    <property type="term" value="P:protein ubiquitination"/>
    <property type="evidence" value="ECO:0007669"/>
    <property type="project" value="UniProtKB-UniPathway"/>
</dbReference>
<dbReference type="CDD" id="cd18186">
    <property type="entry name" value="BTB_POZ_ZBTB_KLHL-like"/>
    <property type="match status" value="1"/>
</dbReference>
<dbReference type="Gene3D" id="3.30.710.10">
    <property type="entry name" value="Potassium Channel Kv1.1, Chain A"/>
    <property type="match status" value="1"/>
</dbReference>
<dbReference type="InterPro" id="IPR044784">
    <property type="entry name" value="At1g01640-like"/>
</dbReference>
<dbReference type="InterPro" id="IPR000210">
    <property type="entry name" value="BTB/POZ_dom"/>
</dbReference>
<dbReference type="InterPro" id="IPR011333">
    <property type="entry name" value="SKP1/BTB/POZ_sf"/>
</dbReference>
<dbReference type="PANTHER" id="PTHR47274:SF3">
    <property type="entry name" value="BTB DOMAIN-CONTAINING PROTEIN"/>
    <property type="match status" value="1"/>
</dbReference>
<dbReference type="PANTHER" id="PTHR47274">
    <property type="entry name" value="BTB/POZ DOMAIN CONTAINING PROTEIN, EXPRESSED-RELATED"/>
    <property type="match status" value="1"/>
</dbReference>
<dbReference type="Pfam" id="PF00651">
    <property type="entry name" value="BTB"/>
    <property type="match status" value="1"/>
</dbReference>
<dbReference type="SUPFAM" id="SSF54695">
    <property type="entry name" value="POZ domain"/>
    <property type="match status" value="1"/>
</dbReference>
<dbReference type="PROSITE" id="PS50097">
    <property type="entry name" value="BTB"/>
    <property type="match status" value="1"/>
</dbReference>
<proteinExistence type="inferred from homology"/>
<protein>
    <recommendedName>
        <fullName>Putative BTB/POZ domain-containing protein At3g29740</fullName>
    </recommendedName>
</protein>
<reference key="1">
    <citation type="journal article" date="2000" name="DNA Res.">
        <title>Structural analysis of Arabidopsis thaliana chromosome 3. II. Sequence features of the 4,251,695 bp regions covered by 90 P1, TAC and BAC clones.</title>
        <authorList>
            <person name="Kaneko T."/>
            <person name="Katoh T."/>
            <person name="Sato S."/>
            <person name="Nakamura Y."/>
            <person name="Asamizu E."/>
            <person name="Tabata S."/>
        </authorList>
    </citation>
    <scope>NUCLEOTIDE SEQUENCE [LARGE SCALE GENOMIC DNA]</scope>
    <source>
        <strain>cv. Columbia</strain>
    </source>
</reference>
<reference key="2">
    <citation type="journal article" date="2017" name="Plant J.">
        <title>Araport11: a complete reannotation of the Arabidopsis thaliana reference genome.</title>
        <authorList>
            <person name="Cheng C.Y."/>
            <person name="Krishnakumar V."/>
            <person name="Chan A.P."/>
            <person name="Thibaud-Nissen F."/>
            <person name="Schobel S."/>
            <person name="Town C.D."/>
        </authorList>
    </citation>
    <scope>GENOME REANNOTATION</scope>
    <source>
        <strain>cv. Columbia</strain>
    </source>
</reference>
<reference key="3">
    <citation type="journal article" date="2005" name="J. Biol. Chem.">
        <title>Cullins 3a and 3b assemble with members of the broad complex/tramtrack/bric-a-brac (BTB) protein family to form essential ubiquitin-protein ligases (E3s) in Arabidopsis.</title>
        <authorList>
            <person name="Gingerich D.J."/>
            <person name="Gagne J.M."/>
            <person name="Salter D.W."/>
            <person name="Hellmann H."/>
            <person name="Estelle M."/>
            <person name="Ma L."/>
            <person name="Vierstra R.D."/>
        </authorList>
    </citation>
    <scope>DOMAIN BTB</scope>
</reference>
<accession>Q9LRQ1</accession>